<gene>
    <name evidence="3" type="primary">TPK1</name>
    <name evidence="6" type="ordered locus">At1g02880</name>
    <name evidence="7" type="ORF">F22D16.12</name>
</gene>
<accession>B9DGU7</accession>
<accession>Q93Z45</accession>
<accession>Q9SRY1</accession>
<protein>
    <recommendedName>
        <fullName evidence="3">Thiamine pyrophosphokinase 1</fullName>
        <shortName evidence="3">AtTPK1</shortName>
        <ecNumber evidence="1">2.7.6.2</ecNumber>
    </recommendedName>
    <alternativeName>
        <fullName evidence="3">Thiamine kinase 1</fullName>
    </alternativeName>
</protein>
<name>TPK1_ARATH</name>
<sequence>MSAMDVMIHSSSFLLPCDETSTGTRYALVVLNQSLPRFTPLLWEHAKLRLCADGGANRIYDELPLFFPNEDALAIRNRYKPDVIKGDMDSIRRDVLDFYINLGTKVIDESHDQDTTDLDKCILYIRHSTLNQETSGLQILATGALGGRFDHEAGNLNVLYRYPDTRIVLLSDDCLIQLLPKTHRHEIHIQSSLEGPHCGLIPIGTPSAKTTTSGLQWDLSNTEMRFGGLISTSNLVKEEKITVESDSDLLWTISIKKTGLSIQDHTP</sequence>
<organism>
    <name type="scientific">Arabidopsis thaliana</name>
    <name type="common">Mouse-ear cress</name>
    <dbReference type="NCBI Taxonomy" id="3702"/>
    <lineage>
        <taxon>Eukaryota</taxon>
        <taxon>Viridiplantae</taxon>
        <taxon>Streptophyta</taxon>
        <taxon>Embryophyta</taxon>
        <taxon>Tracheophyta</taxon>
        <taxon>Spermatophyta</taxon>
        <taxon>Magnoliopsida</taxon>
        <taxon>eudicotyledons</taxon>
        <taxon>Gunneridae</taxon>
        <taxon>Pentapetalae</taxon>
        <taxon>rosids</taxon>
        <taxon>malvids</taxon>
        <taxon>Brassicales</taxon>
        <taxon>Brassicaceae</taxon>
        <taxon>Camelineae</taxon>
        <taxon>Arabidopsis</taxon>
    </lineage>
</organism>
<dbReference type="EC" id="2.7.6.2" evidence="1"/>
<dbReference type="EMBL" id="AC009525">
    <property type="protein sequence ID" value="AAF02878.1"/>
    <property type="molecule type" value="Genomic_DNA"/>
</dbReference>
<dbReference type="EMBL" id="CP002684">
    <property type="protein sequence ID" value="AEE27488.1"/>
    <property type="molecule type" value="Genomic_DNA"/>
</dbReference>
<dbReference type="EMBL" id="CP002684">
    <property type="protein sequence ID" value="AEE27489.1"/>
    <property type="molecule type" value="Genomic_DNA"/>
</dbReference>
<dbReference type="EMBL" id="CP002684">
    <property type="protein sequence ID" value="AEE27490.1"/>
    <property type="molecule type" value="Genomic_DNA"/>
</dbReference>
<dbReference type="EMBL" id="CP002684">
    <property type="protein sequence ID" value="ANM59189.1"/>
    <property type="molecule type" value="Genomic_DNA"/>
</dbReference>
<dbReference type="EMBL" id="AY058144">
    <property type="protein sequence ID" value="AAL25560.1"/>
    <property type="molecule type" value="mRNA"/>
</dbReference>
<dbReference type="EMBL" id="AY101539">
    <property type="protein sequence ID" value="AAM26660.1"/>
    <property type="molecule type" value="mRNA"/>
</dbReference>
<dbReference type="EMBL" id="AK317288">
    <property type="protein sequence ID" value="BAH19964.1"/>
    <property type="molecule type" value="mRNA"/>
</dbReference>
<dbReference type="EMBL" id="AY085584">
    <property type="protein sequence ID" value="AAM62805.1"/>
    <property type="molecule type" value="mRNA"/>
</dbReference>
<dbReference type="PIR" id="B86159">
    <property type="entry name" value="B86159"/>
</dbReference>
<dbReference type="RefSeq" id="NP_001321569.1">
    <molecule id="B9DGU7-3"/>
    <property type="nucleotide sequence ID" value="NM_001331362.1"/>
</dbReference>
<dbReference type="RefSeq" id="NP_563669.1">
    <molecule id="B9DGU7-2"/>
    <property type="nucleotide sequence ID" value="NM_100169.2"/>
</dbReference>
<dbReference type="RefSeq" id="NP_849579.1">
    <molecule id="B9DGU7-3"/>
    <property type="nucleotide sequence ID" value="NM_179248.1"/>
</dbReference>
<dbReference type="RefSeq" id="NP_849580.1">
    <molecule id="B9DGU7-1"/>
    <property type="nucleotide sequence ID" value="NM_179249.3"/>
</dbReference>
<dbReference type="SMR" id="B9DGU7"/>
<dbReference type="FunCoup" id="B9DGU7">
    <property type="interactions" value="2002"/>
</dbReference>
<dbReference type="STRING" id="3702.B9DGU7"/>
<dbReference type="iPTMnet" id="B9DGU7"/>
<dbReference type="PaxDb" id="3702-AT1G02880.3"/>
<dbReference type="ProteomicsDB" id="234459">
    <molecule id="B9DGU7-1"/>
</dbReference>
<dbReference type="EnsemblPlants" id="AT1G02880.1">
    <molecule id="B9DGU7-3"/>
    <property type="protein sequence ID" value="AT1G02880.1"/>
    <property type="gene ID" value="AT1G02880"/>
</dbReference>
<dbReference type="EnsemblPlants" id="AT1G02880.2">
    <molecule id="B9DGU7-2"/>
    <property type="protein sequence ID" value="AT1G02880.2"/>
    <property type="gene ID" value="AT1G02880"/>
</dbReference>
<dbReference type="EnsemblPlants" id="AT1G02880.3">
    <molecule id="B9DGU7-1"/>
    <property type="protein sequence ID" value="AT1G02880.3"/>
    <property type="gene ID" value="AT1G02880"/>
</dbReference>
<dbReference type="EnsemblPlants" id="AT1G02880.5">
    <molecule id="B9DGU7-3"/>
    <property type="protein sequence ID" value="AT1G02880.5"/>
    <property type="gene ID" value="AT1G02880"/>
</dbReference>
<dbReference type="GeneID" id="839303"/>
<dbReference type="Gramene" id="AT1G02880.1">
    <molecule id="B9DGU7-3"/>
    <property type="protein sequence ID" value="AT1G02880.1"/>
    <property type="gene ID" value="AT1G02880"/>
</dbReference>
<dbReference type="Gramene" id="AT1G02880.2">
    <molecule id="B9DGU7-2"/>
    <property type="protein sequence ID" value="AT1G02880.2"/>
    <property type="gene ID" value="AT1G02880"/>
</dbReference>
<dbReference type="Gramene" id="AT1G02880.3">
    <molecule id="B9DGU7-1"/>
    <property type="protein sequence ID" value="AT1G02880.3"/>
    <property type="gene ID" value="AT1G02880"/>
</dbReference>
<dbReference type="Gramene" id="AT1G02880.5">
    <molecule id="B9DGU7-3"/>
    <property type="protein sequence ID" value="AT1G02880.5"/>
    <property type="gene ID" value="AT1G02880"/>
</dbReference>
<dbReference type="KEGG" id="ath:AT1G02880"/>
<dbReference type="Araport" id="AT1G02880"/>
<dbReference type="TAIR" id="AT1G02880">
    <property type="gene designation" value="TPK1"/>
</dbReference>
<dbReference type="eggNOG" id="KOG3153">
    <property type="taxonomic scope" value="Eukaryota"/>
</dbReference>
<dbReference type="InParanoid" id="B9DGU7"/>
<dbReference type="OMA" id="TDMCKAL"/>
<dbReference type="OrthoDB" id="25149at2759"/>
<dbReference type="PhylomeDB" id="B9DGU7"/>
<dbReference type="BioCyc" id="MetaCyc:AT1G02880-MONOMER"/>
<dbReference type="SABIO-RK" id="B9DGU7"/>
<dbReference type="UniPathway" id="UPA00060">
    <property type="reaction ID" value="UER00597"/>
</dbReference>
<dbReference type="PRO" id="PR:B9DGU7"/>
<dbReference type="Proteomes" id="UP000006548">
    <property type="component" value="Chromosome 1"/>
</dbReference>
<dbReference type="ExpressionAtlas" id="B9DGU7">
    <property type="expression patterns" value="baseline and differential"/>
</dbReference>
<dbReference type="GO" id="GO:0005829">
    <property type="term" value="C:cytosol"/>
    <property type="evidence" value="ECO:0000314"/>
    <property type="project" value="TAIR"/>
</dbReference>
<dbReference type="GO" id="GO:0005524">
    <property type="term" value="F:ATP binding"/>
    <property type="evidence" value="ECO:0007669"/>
    <property type="project" value="UniProtKB-KW"/>
</dbReference>
<dbReference type="GO" id="GO:0016301">
    <property type="term" value="F:kinase activity"/>
    <property type="evidence" value="ECO:0007669"/>
    <property type="project" value="UniProtKB-KW"/>
</dbReference>
<dbReference type="GO" id="GO:0030975">
    <property type="term" value="F:thiamine binding"/>
    <property type="evidence" value="ECO:0007669"/>
    <property type="project" value="InterPro"/>
</dbReference>
<dbReference type="GO" id="GO:0004788">
    <property type="term" value="F:thiamine diphosphokinase activity"/>
    <property type="evidence" value="ECO:0000314"/>
    <property type="project" value="TAIR"/>
</dbReference>
<dbReference type="GO" id="GO:0009229">
    <property type="term" value="P:thiamine diphosphate biosynthetic process"/>
    <property type="evidence" value="ECO:0007669"/>
    <property type="project" value="UniProtKB-UniPathway"/>
</dbReference>
<dbReference type="GO" id="GO:0006772">
    <property type="term" value="P:thiamine metabolic process"/>
    <property type="evidence" value="ECO:0000316"/>
    <property type="project" value="TAIR"/>
</dbReference>
<dbReference type="CDD" id="cd07995">
    <property type="entry name" value="TPK"/>
    <property type="match status" value="1"/>
</dbReference>
<dbReference type="FunFam" id="2.60.120.320:FF:000001">
    <property type="entry name" value="Thiamine pyrophosphokinase"/>
    <property type="match status" value="1"/>
</dbReference>
<dbReference type="FunFam" id="3.40.50.10240:FF:000001">
    <property type="entry name" value="Thiamine pyrophosphokinase"/>
    <property type="match status" value="1"/>
</dbReference>
<dbReference type="Gene3D" id="3.40.50.10240">
    <property type="entry name" value="Thiamin pyrophosphokinase, catalytic domain"/>
    <property type="match status" value="1"/>
</dbReference>
<dbReference type="Gene3D" id="2.60.120.320">
    <property type="entry name" value="Thiamin pyrophosphokinase, thiamin-binding domain"/>
    <property type="match status" value="1"/>
</dbReference>
<dbReference type="InterPro" id="IPR006282">
    <property type="entry name" value="Thi_PPkinase"/>
</dbReference>
<dbReference type="InterPro" id="IPR016966">
    <property type="entry name" value="Thiamin_pyrophosphokinase_euk"/>
</dbReference>
<dbReference type="InterPro" id="IPR007373">
    <property type="entry name" value="Thiamin_PyroPKinase_B1-bd"/>
</dbReference>
<dbReference type="InterPro" id="IPR036371">
    <property type="entry name" value="TPK_B1-bd_sf"/>
</dbReference>
<dbReference type="InterPro" id="IPR007371">
    <property type="entry name" value="TPK_catalytic"/>
</dbReference>
<dbReference type="InterPro" id="IPR036759">
    <property type="entry name" value="TPK_catalytic_sf"/>
</dbReference>
<dbReference type="NCBIfam" id="TIGR01378">
    <property type="entry name" value="thi_PPkinase"/>
    <property type="match status" value="1"/>
</dbReference>
<dbReference type="PANTHER" id="PTHR13622">
    <property type="entry name" value="THIAMIN PYROPHOSPHOKINASE"/>
    <property type="match status" value="1"/>
</dbReference>
<dbReference type="PANTHER" id="PTHR13622:SF8">
    <property type="entry name" value="THIAMIN PYROPHOSPHOKINASE 1"/>
    <property type="match status" value="1"/>
</dbReference>
<dbReference type="Pfam" id="PF04265">
    <property type="entry name" value="TPK_B1_binding"/>
    <property type="match status" value="1"/>
</dbReference>
<dbReference type="Pfam" id="PF04263">
    <property type="entry name" value="TPK_catalytic"/>
    <property type="match status" value="1"/>
</dbReference>
<dbReference type="PIRSF" id="PIRSF031057">
    <property type="entry name" value="Thiamin_pyrophosphokinase"/>
    <property type="match status" value="1"/>
</dbReference>
<dbReference type="SMART" id="SM00983">
    <property type="entry name" value="TPK_B1_binding"/>
    <property type="match status" value="1"/>
</dbReference>
<dbReference type="SUPFAM" id="SSF63999">
    <property type="entry name" value="Thiamin pyrophosphokinase, catalytic domain"/>
    <property type="match status" value="1"/>
</dbReference>
<dbReference type="SUPFAM" id="SSF63862">
    <property type="entry name" value="Thiamin pyrophosphokinase, substrate-binding domain"/>
    <property type="match status" value="1"/>
</dbReference>
<proteinExistence type="evidence at protein level"/>
<reference key="1">
    <citation type="journal article" date="2000" name="Nature">
        <title>Sequence and analysis of chromosome 1 of the plant Arabidopsis thaliana.</title>
        <authorList>
            <person name="Theologis A."/>
            <person name="Ecker J.R."/>
            <person name="Palm C.J."/>
            <person name="Federspiel N.A."/>
            <person name="Kaul S."/>
            <person name="White O."/>
            <person name="Alonso J."/>
            <person name="Altafi H."/>
            <person name="Araujo R."/>
            <person name="Bowman C.L."/>
            <person name="Brooks S.Y."/>
            <person name="Buehler E."/>
            <person name="Chan A."/>
            <person name="Chao Q."/>
            <person name="Chen H."/>
            <person name="Cheuk R.F."/>
            <person name="Chin C.W."/>
            <person name="Chung M.K."/>
            <person name="Conn L."/>
            <person name="Conway A.B."/>
            <person name="Conway A.R."/>
            <person name="Creasy T.H."/>
            <person name="Dewar K."/>
            <person name="Dunn P."/>
            <person name="Etgu P."/>
            <person name="Feldblyum T.V."/>
            <person name="Feng J.-D."/>
            <person name="Fong B."/>
            <person name="Fujii C.Y."/>
            <person name="Gill J.E."/>
            <person name="Goldsmith A.D."/>
            <person name="Haas B."/>
            <person name="Hansen N.F."/>
            <person name="Hughes B."/>
            <person name="Huizar L."/>
            <person name="Hunter J.L."/>
            <person name="Jenkins J."/>
            <person name="Johnson-Hopson C."/>
            <person name="Khan S."/>
            <person name="Khaykin E."/>
            <person name="Kim C.J."/>
            <person name="Koo H.L."/>
            <person name="Kremenetskaia I."/>
            <person name="Kurtz D.B."/>
            <person name="Kwan A."/>
            <person name="Lam B."/>
            <person name="Langin-Hooper S."/>
            <person name="Lee A."/>
            <person name="Lee J.M."/>
            <person name="Lenz C.A."/>
            <person name="Li J.H."/>
            <person name="Li Y.-P."/>
            <person name="Lin X."/>
            <person name="Liu S.X."/>
            <person name="Liu Z.A."/>
            <person name="Luros J.S."/>
            <person name="Maiti R."/>
            <person name="Marziali A."/>
            <person name="Militscher J."/>
            <person name="Miranda M."/>
            <person name="Nguyen M."/>
            <person name="Nierman W.C."/>
            <person name="Osborne B.I."/>
            <person name="Pai G."/>
            <person name="Peterson J."/>
            <person name="Pham P.K."/>
            <person name="Rizzo M."/>
            <person name="Rooney T."/>
            <person name="Rowley D."/>
            <person name="Sakano H."/>
            <person name="Salzberg S.L."/>
            <person name="Schwartz J.R."/>
            <person name="Shinn P."/>
            <person name="Southwick A.M."/>
            <person name="Sun H."/>
            <person name="Tallon L.J."/>
            <person name="Tambunga G."/>
            <person name="Toriumi M.J."/>
            <person name="Town C.D."/>
            <person name="Utterback T."/>
            <person name="Van Aken S."/>
            <person name="Vaysberg M."/>
            <person name="Vysotskaia V.S."/>
            <person name="Walker M."/>
            <person name="Wu D."/>
            <person name="Yu G."/>
            <person name="Fraser C.M."/>
            <person name="Venter J.C."/>
            <person name="Davis R.W."/>
        </authorList>
    </citation>
    <scope>NUCLEOTIDE SEQUENCE [LARGE SCALE GENOMIC DNA]</scope>
    <source>
        <strain>cv. Columbia</strain>
    </source>
</reference>
<reference key="2">
    <citation type="journal article" date="2017" name="Plant J.">
        <title>Araport11: a complete reannotation of the Arabidopsis thaliana reference genome.</title>
        <authorList>
            <person name="Cheng C.Y."/>
            <person name="Krishnakumar V."/>
            <person name="Chan A.P."/>
            <person name="Thibaud-Nissen F."/>
            <person name="Schobel S."/>
            <person name="Town C.D."/>
        </authorList>
    </citation>
    <scope>GENOME REANNOTATION</scope>
    <source>
        <strain>cv. Columbia</strain>
    </source>
</reference>
<reference key="3">
    <citation type="journal article" date="2003" name="Science">
        <title>Empirical analysis of transcriptional activity in the Arabidopsis genome.</title>
        <authorList>
            <person name="Yamada K."/>
            <person name="Lim J."/>
            <person name="Dale J.M."/>
            <person name="Chen H."/>
            <person name="Shinn P."/>
            <person name="Palm C.J."/>
            <person name="Southwick A.M."/>
            <person name="Wu H.C."/>
            <person name="Kim C.J."/>
            <person name="Nguyen M."/>
            <person name="Pham P.K."/>
            <person name="Cheuk R.F."/>
            <person name="Karlin-Newmann G."/>
            <person name="Liu S.X."/>
            <person name="Lam B."/>
            <person name="Sakano H."/>
            <person name="Wu T."/>
            <person name="Yu G."/>
            <person name="Miranda M."/>
            <person name="Quach H.L."/>
            <person name="Tripp M."/>
            <person name="Chang C.H."/>
            <person name="Lee J.M."/>
            <person name="Toriumi M.J."/>
            <person name="Chan M.M."/>
            <person name="Tang C.C."/>
            <person name="Onodera C.S."/>
            <person name="Deng J.M."/>
            <person name="Akiyama K."/>
            <person name="Ansari Y."/>
            <person name="Arakawa T."/>
            <person name="Banh J."/>
            <person name="Banno F."/>
            <person name="Bowser L."/>
            <person name="Brooks S.Y."/>
            <person name="Carninci P."/>
            <person name="Chao Q."/>
            <person name="Choy N."/>
            <person name="Enju A."/>
            <person name="Goldsmith A.D."/>
            <person name="Gurjal M."/>
            <person name="Hansen N.F."/>
            <person name="Hayashizaki Y."/>
            <person name="Johnson-Hopson C."/>
            <person name="Hsuan V.W."/>
            <person name="Iida K."/>
            <person name="Karnes M."/>
            <person name="Khan S."/>
            <person name="Koesema E."/>
            <person name="Ishida J."/>
            <person name="Jiang P.X."/>
            <person name="Jones T."/>
            <person name="Kawai J."/>
            <person name="Kamiya A."/>
            <person name="Meyers C."/>
            <person name="Nakajima M."/>
            <person name="Narusaka M."/>
            <person name="Seki M."/>
            <person name="Sakurai T."/>
            <person name="Satou M."/>
            <person name="Tamse R."/>
            <person name="Vaysberg M."/>
            <person name="Wallender E.K."/>
            <person name="Wong C."/>
            <person name="Yamamura Y."/>
            <person name="Yuan S."/>
            <person name="Shinozaki K."/>
            <person name="Davis R.W."/>
            <person name="Theologis A."/>
            <person name="Ecker J.R."/>
        </authorList>
    </citation>
    <scope>NUCLEOTIDE SEQUENCE [LARGE SCALE MRNA] (ISOFORM 3)</scope>
    <source>
        <strain>cv. Columbia</strain>
    </source>
</reference>
<reference key="4">
    <citation type="journal article" date="2009" name="DNA Res.">
        <title>Analysis of multiple occurrences of alternative splicing events in Arabidopsis thaliana using novel sequenced full-length cDNAs.</title>
        <authorList>
            <person name="Iida K."/>
            <person name="Fukami-Kobayashi K."/>
            <person name="Toyoda A."/>
            <person name="Sakaki Y."/>
            <person name="Kobayashi M."/>
            <person name="Seki M."/>
            <person name="Shinozaki K."/>
        </authorList>
    </citation>
    <scope>NUCLEOTIDE SEQUENCE [LARGE SCALE MRNA] (ISOFORM 1)</scope>
    <source>
        <strain>cv. Columbia</strain>
    </source>
</reference>
<reference key="5">
    <citation type="submission" date="2002-03" db="EMBL/GenBank/DDBJ databases">
        <title>Full-length cDNA from Arabidopsis thaliana.</title>
        <authorList>
            <person name="Brover V.V."/>
            <person name="Troukhan M.E."/>
            <person name="Alexandrov N.A."/>
            <person name="Lu Y.-P."/>
            <person name="Flavell R.B."/>
            <person name="Feldmann K.A."/>
        </authorList>
    </citation>
    <scope>NUCLEOTIDE SEQUENCE [LARGE SCALE MRNA] (ISOFORM 2)</scope>
    <source>
        <strain>cv. Columbia</strain>
    </source>
</reference>
<reference key="6">
    <citation type="journal article" date="2007" name="Plant Mol. Biol.">
        <title>Thiamin pyrophosphokinase is required for thiamin cofactor activation in Arabidopsis.</title>
        <authorList>
            <person name="Ajjawi I."/>
            <person name="Rodriguez Milla M.A."/>
            <person name="Cushman J."/>
            <person name="Shintani D.K."/>
        </authorList>
    </citation>
    <scope>FUNCTION</scope>
    <scope>CATALYTIC ACTIVITY</scope>
    <scope>BIOPHYSICOCHEMICAL PROPERTIES</scope>
    <scope>PATHWAY</scope>
    <scope>SUBCELLULAR LOCATION</scope>
    <scope>TISSUE SPECIFICITY</scope>
    <scope>DISRUPTION PHENOTYPE</scope>
</reference>
<feature type="chain" id="PRO_0000423966" description="Thiamine pyrophosphokinase 1">
    <location>
        <begin position="1"/>
        <end position="267"/>
    </location>
</feature>
<feature type="splice variant" id="VSP_053285" description="In isoform 3." evidence="2">
    <original>MSAMDVMIHSSSFLLPCDETSTGTRYALVVLNQSLPRFTPLLWEHAKLRLCADGGANRIYDELPLFFPNEDALAIRN</original>
    <variation>MKKNLYF</variation>
    <location>
        <begin position="1"/>
        <end position="77"/>
    </location>
</feature>
<feature type="splice variant" id="VSP_053286" description="In isoform 2." evidence="4">
    <location>
        <begin position="1"/>
        <end position="3"/>
    </location>
</feature>
<evidence type="ECO:0000269" key="1">
    <source>
    </source>
</evidence>
<evidence type="ECO:0000303" key="2">
    <source>
    </source>
</evidence>
<evidence type="ECO:0000303" key="3">
    <source>
    </source>
</evidence>
<evidence type="ECO:0000303" key="4">
    <source ref="5"/>
</evidence>
<evidence type="ECO:0000305" key="5"/>
<evidence type="ECO:0000312" key="6">
    <source>
        <dbReference type="Araport" id="AT1G02880"/>
    </source>
</evidence>
<evidence type="ECO:0000312" key="7">
    <source>
        <dbReference type="EMBL" id="AAF02878.1"/>
    </source>
</evidence>
<comment type="function">
    <text evidence="1">Catalyzes the phosphorylation of thiamine to thiamine pyrophosphate (TPP) (PubMed:17611796). TPP is an active cofactor for enzymes involved in glycolysis and energy production (PubMed:17611796). Plant leaves require high levels of TPP for photosynthesis and carbohydrate metabolism (PubMed:17611796).</text>
</comment>
<comment type="catalytic activity">
    <reaction evidence="1">
        <text>thiamine + ATP = thiamine diphosphate + AMP + H(+)</text>
        <dbReference type="Rhea" id="RHEA:11576"/>
        <dbReference type="ChEBI" id="CHEBI:15378"/>
        <dbReference type="ChEBI" id="CHEBI:18385"/>
        <dbReference type="ChEBI" id="CHEBI:30616"/>
        <dbReference type="ChEBI" id="CHEBI:58937"/>
        <dbReference type="ChEBI" id="CHEBI:456215"/>
        <dbReference type="EC" id="2.7.6.2"/>
    </reaction>
    <physiologicalReaction direction="left-to-right" evidence="1">
        <dbReference type="Rhea" id="RHEA:11577"/>
    </physiologicalReaction>
</comment>
<comment type="biophysicochemical properties">
    <kinetics>
        <KM evidence="1">1.28 uM for thiamine</KM>
        <Vmax evidence="1">9.6 pmol/min/mg enzyme with thiamine as substrate</Vmax>
    </kinetics>
    <phDependence>
        <text evidence="1">Optimum pH is 7. Active between pH 6 and pH 8.</text>
    </phDependence>
    <temperatureDependence>
        <text evidence="1">Optimum temperature is 37 degrees Celsius.</text>
    </temperatureDependence>
</comment>
<comment type="pathway">
    <text evidence="1">Cofactor biosynthesis; thiamine diphosphate biosynthesis; thiamine diphosphate from thiamine: step 1/1.</text>
</comment>
<comment type="subcellular location">
    <subcellularLocation>
        <location evidence="1">Cytoplasm</location>
        <location evidence="1">Cytosol</location>
    </subcellularLocation>
</comment>
<comment type="alternative products">
    <event type="alternative splicing"/>
    <isoform>
        <id>B9DGU7-1</id>
        <name>1</name>
        <sequence type="displayed"/>
    </isoform>
    <isoform>
        <id>B9DGU7-2</id>
        <name>2</name>
        <sequence type="described" ref="VSP_053286"/>
    </isoform>
    <isoform>
        <id>B9DGU7-3</id>
        <name>3</name>
        <sequence type="described" ref="VSP_053285"/>
    </isoform>
</comment>
<comment type="tissue specificity">
    <text evidence="1">Expressed in roots, leaves and flowers.</text>
</comment>
<comment type="disruption phenotype">
    <text evidence="1">No visible phenotype under normal growth conditions (PubMed:17611796). Tpk1 and tpk2 double mutants exhibit a seedling lethal phenotype (PubMed:17611796).</text>
</comment>
<comment type="similarity">
    <text evidence="5">Belongs to the thiamine pyrophosphokinase family.</text>
</comment>
<keyword id="KW-0025">Alternative splicing</keyword>
<keyword id="KW-0067">ATP-binding</keyword>
<keyword id="KW-0963">Cytoplasm</keyword>
<keyword id="KW-0418">Kinase</keyword>
<keyword id="KW-0547">Nucleotide-binding</keyword>
<keyword id="KW-1185">Reference proteome</keyword>
<keyword id="KW-0808">Transferase</keyword>